<accession>Q6BMD6</accession>
<gene>
    <name type="ordered locus">DEHA2F06380g</name>
</gene>
<comment type="function">
    <text evidence="1">May be involved in vacuolar sorting and osmoregulation.</text>
</comment>
<comment type="cofactor">
    <cofactor evidence="2">
        <name>Zn(2+)</name>
        <dbReference type="ChEBI" id="CHEBI:29105"/>
    </cofactor>
    <text evidence="2">Binds 2 Zn(2+) ions per subunit.</text>
</comment>
<comment type="subcellular location">
    <subcellularLocation>
        <location evidence="1">Vacuole membrane</location>
        <topology evidence="3">Multi-pass membrane protein</topology>
    </subcellularLocation>
</comment>
<comment type="similarity">
    <text evidence="6">Belongs to the peptidase M28 family.</text>
</comment>
<sequence length="1016" mass="114986">MAETESGTGNSPSHRLSETSNASGNRSHQQSKQIASYKSSKPNVFIRFIRAIFGYRKTSVTLFVFITIIATLILVELSNSLDFSVKLPTNNLERTILDNSWLDLQKIGKEEHPYTSKGNDYVHDYLEAKITELIGKSLFIECDNDVNYTNNIIFKTENDLYNQVTYYESNNLLVRINGSDSSLPALLVSAHFDSVPSSFGVTDDGMGIASLLGILNYYSSDGIDQPMRTIILNFNNNEEFGLMGATSFLHHPWFKQVRYFLNLEGTGAGGKAVLFRGTDYGIVKYFKHVRYPFGTSLFQQGFNNHLIHSETDYKIYKENGGIRGIDLAFYKPRDIYHTASDSIKNIDIKSLWHMLSNSLDFVEIVSSQRIDLDDEDTSPESDEKSREFAIFSSFFNWFFVIPASQLVLINVTCLAVIPLISLPLLVIIFNYKKNWHIGFINAIKFPVSLVLSICILNIITHNVIASINEFLPNSSYDSIVSTLYSLFLLLNYLFLNGINFIFKGYKGLYHDEKLILIIQTSFIYWVLLIVSTNKLSKNKIGNDHTGEFPLIMLFLLQSIGALFGLFSWSFKKTTPDELRNNDDEACQALLSREEHNNYGSNEAELESGEPISSNSSVSLNSSSSQVTNNLVKNLRKSFSYDWSIQYVVIVPLSSLIVYNTGSLLLSGLNKSIQESLNAEKLIFDLIQLVAVTLAIPFLPFIFKINRLLVTALVLVFCSGFISIFLKSPFDQLNPLKLRFVQSINLDESSDISVVNVFGRYGSPMNNVLLDLPSLKETNESLECNNLQDGMQLCSYKTLLSPNLSPDVTDFNDYLDVQVLKNSSSDYPYGLLSGEIKINVPENRVCRLSFNNSNFENSKQSLVRTILVYEDNNYENSSNKLFPFEVSEFQLANLPEGFSRDKKGTYIYKNLNGIDKLELNKLSWDKPYHVGFQWMPKFVDSVSAENENTNVPYTTDFNNLGIQVECFWGNLGYANNENKSEDERIPAYGEVLHYSPNYVSWANKESGLVSVSKYVEI</sequence>
<proteinExistence type="inferred from homology"/>
<organism>
    <name type="scientific">Debaryomyces hansenii (strain ATCC 36239 / CBS 767 / BCRC 21394 / JCM 1990 / NBRC 0083 / IGC 2968)</name>
    <name type="common">Yeast</name>
    <name type="synonym">Torulaspora hansenii</name>
    <dbReference type="NCBI Taxonomy" id="284592"/>
    <lineage>
        <taxon>Eukaryota</taxon>
        <taxon>Fungi</taxon>
        <taxon>Dikarya</taxon>
        <taxon>Ascomycota</taxon>
        <taxon>Saccharomycotina</taxon>
        <taxon>Pichiomycetes</taxon>
        <taxon>Debaryomycetaceae</taxon>
        <taxon>Debaryomyces</taxon>
    </lineage>
</organism>
<protein>
    <recommendedName>
        <fullName evidence="1">Vacuolar membrane protease</fullName>
        <ecNumber evidence="6">3.4.-.-</ecNumber>
    </recommendedName>
    <alternativeName>
        <fullName evidence="1">FXNA-related family protease 1</fullName>
    </alternativeName>
</protein>
<keyword id="KW-0325">Glycoprotein</keyword>
<keyword id="KW-0378">Hydrolase</keyword>
<keyword id="KW-0472">Membrane</keyword>
<keyword id="KW-0479">Metal-binding</keyword>
<keyword id="KW-0482">Metalloprotease</keyword>
<keyword id="KW-0645">Protease</keyword>
<keyword id="KW-1185">Reference proteome</keyword>
<keyword id="KW-0812">Transmembrane</keyword>
<keyword id="KW-1133">Transmembrane helix</keyword>
<keyword id="KW-0926">Vacuole</keyword>
<keyword id="KW-0862">Zinc</keyword>
<evidence type="ECO:0000250" key="1">
    <source>
        <dbReference type="UniProtKB" id="P38244"/>
    </source>
</evidence>
<evidence type="ECO:0000250" key="2">
    <source>
        <dbReference type="UniProtKB" id="P80561"/>
    </source>
</evidence>
<evidence type="ECO:0000255" key="3"/>
<evidence type="ECO:0000255" key="4">
    <source>
        <dbReference type="PROSITE-ProRule" id="PRU00498"/>
    </source>
</evidence>
<evidence type="ECO:0000256" key="5">
    <source>
        <dbReference type="SAM" id="MobiDB-lite"/>
    </source>
</evidence>
<evidence type="ECO:0000305" key="6"/>
<feature type="chain" id="PRO_0000411716" description="Vacuolar membrane protease">
    <location>
        <begin position="1"/>
        <end position="1016"/>
    </location>
</feature>
<feature type="topological domain" description="Cytoplasmic" evidence="1">
    <location>
        <begin position="1"/>
        <end position="57"/>
    </location>
</feature>
<feature type="transmembrane region" description="Helical; Name=1" evidence="3">
    <location>
        <begin position="58"/>
        <end position="78"/>
    </location>
</feature>
<feature type="topological domain" description="Vacuolar" evidence="1">
    <location>
        <begin position="79"/>
        <end position="408"/>
    </location>
</feature>
<feature type="transmembrane region" description="Helical; Name=2" evidence="3">
    <location>
        <begin position="409"/>
        <end position="429"/>
    </location>
</feature>
<feature type="topological domain" description="Cytoplasmic" evidence="1">
    <location>
        <begin position="430"/>
        <end position="438"/>
    </location>
</feature>
<feature type="transmembrane region" description="Helical; Name=3" evidence="3">
    <location>
        <begin position="439"/>
        <end position="459"/>
    </location>
</feature>
<feature type="topological domain" description="Vacuolar" evidence="1">
    <location>
        <begin position="460"/>
        <end position="481"/>
    </location>
</feature>
<feature type="transmembrane region" description="Helical; Name=4" evidence="3">
    <location>
        <begin position="482"/>
        <end position="502"/>
    </location>
</feature>
<feature type="topological domain" description="Cytoplasmic" evidence="1">
    <location>
        <begin position="503"/>
        <end position="511"/>
    </location>
</feature>
<feature type="transmembrane region" description="Helical; Name=5" evidence="3">
    <location>
        <begin position="512"/>
        <end position="532"/>
    </location>
</feature>
<feature type="topological domain" description="Vacuolar" evidence="1">
    <location>
        <begin position="533"/>
        <end position="547"/>
    </location>
</feature>
<feature type="transmembrane region" description="Helical; Name=6" evidence="3">
    <location>
        <begin position="548"/>
        <end position="568"/>
    </location>
</feature>
<feature type="topological domain" description="Cytoplasmic" evidence="1">
    <location>
        <begin position="569"/>
        <end position="646"/>
    </location>
</feature>
<feature type="transmembrane region" description="Helical; Name=7" evidence="3">
    <location>
        <begin position="647"/>
        <end position="667"/>
    </location>
</feature>
<feature type="topological domain" description="Vacuolar" evidence="1">
    <location>
        <begin position="668"/>
        <end position="681"/>
    </location>
</feature>
<feature type="transmembrane region" description="Helical; Name=8" evidence="3">
    <location>
        <begin position="682"/>
        <end position="702"/>
    </location>
</feature>
<feature type="topological domain" description="Cytoplasmic" evidence="1">
    <location>
        <begin position="703"/>
        <end position="706"/>
    </location>
</feature>
<feature type="transmembrane region" description="Helical; Name=9" evidence="3">
    <location>
        <begin position="707"/>
        <end position="727"/>
    </location>
</feature>
<feature type="topological domain" description="Vacuolar" evidence="1">
    <location>
        <begin position="728"/>
        <end position="1016"/>
    </location>
</feature>
<feature type="region of interest" description="Disordered" evidence="5">
    <location>
        <begin position="1"/>
        <end position="36"/>
    </location>
</feature>
<feature type="region of interest" description="Disordered" evidence="5">
    <location>
        <begin position="598"/>
        <end position="622"/>
    </location>
</feature>
<feature type="compositionally biased region" description="Low complexity" evidence="5">
    <location>
        <begin position="612"/>
        <end position="622"/>
    </location>
</feature>
<feature type="active site" description="Proton acceptor" evidence="2">
    <location>
        <position position="238"/>
    </location>
</feature>
<feature type="binding site" evidence="2">
    <location>
        <position position="191"/>
    </location>
    <ligand>
        <name>Zn(2+)</name>
        <dbReference type="ChEBI" id="CHEBI:29105"/>
        <label>1</label>
        <note>catalytic</note>
    </ligand>
</feature>
<feature type="binding site" evidence="2">
    <location>
        <position position="203"/>
    </location>
    <ligand>
        <name>Zn(2+)</name>
        <dbReference type="ChEBI" id="CHEBI:29105"/>
        <label>1</label>
        <note>catalytic</note>
    </ligand>
</feature>
<feature type="binding site" evidence="2">
    <location>
        <position position="203"/>
    </location>
    <ligand>
        <name>Zn(2+)</name>
        <dbReference type="ChEBI" id="CHEBI:29105"/>
        <label>2</label>
        <note>catalytic</note>
    </ligand>
</feature>
<feature type="binding site" evidence="2">
    <location>
        <position position="239"/>
    </location>
    <ligand>
        <name>Zn(2+)</name>
        <dbReference type="ChEBI" id="CHEBI:29105"/>
        <label>2</label>
        <note>catalytic</note>
    </ligand>
</feature>
<feature type="binding site" evidence="2">
    <location>
        <position position="264"/>
    </location>
    <ligand>
        <name>Zn(2+)</name>
        <dbReference type="ChEBI" id="CHEBI:29105"/>
        <label>1</label>
        <note>catalytic</note>
    </ligand>
</feature>
<feature type="binding site" evidence="2">
    <location>
        <position position="337"/>
    </location>
    <ligand>
        <name>Zn(2+)</name>
        <dbReference type="ChEBI" id="CHEBI:29105"/>
        <label>2</label>
        <note>catalytic</note>
    </ligand>
</feature>
<feature type="site" description="Transition state stabilizer" evidence="2">
    <location>
        <position position="336"/>
    </location>
</feature>
<feature type="glycosylation site" description="N-linked (GlcNAc...) asparagine" evidence="4">
    <location>
        <position position="147"/>
    </location>
</feature>
<feature type="glycosylation site" description="N-linked (GlcNAc...) asparagine" evidence="4">
    <location>
        <position position="177"/>
    </location>
</feature>
<feature type="glycosylation site" description="N-linked (GlcNAc...) asparagine" evidence="4">
    <location>
        <position position="473"/>
    </location>
</feature>
<feature type="glycosylation site" description="N-linked (GlcNAc...) asparagine" evidence="4">
    <location>
        <position position="669"/>
    </location>
</feature>
<feature type="glycosylation site" description="N-linked (GlcNAc...) asparagine" evidence="4">
    <location>
        <position position="778"/>
    </location>
</feature>
<feature type="glycosylation site" description="N-linked (GlcNAc...) asparagine" evidence="4">
    <location>
        <position position="821"/>
    </location>
</feature>
<feature type="glycosylation site" description="N-linked (GlcNAc...) asparagine" evidence="4">
    <location>
        <position position="850"/>
    </location>
</feature>
<feature type="glycosylation site" description="N-linked (GlcNAc...) asparagine" evidence="4">
    <location>
        <position position="875"/>
    </location>
</feature>
<feature type="glycosylation site" description="N-linked (GlcNAc...) asparagine" evidence="4">
    <location>
        <position position="977"/>
    </location>
</feature>
<name>PFF1_DEBHA</name>
<reference key="1">
    <citation type="journal article" date="2004" name="Nature">
        <title>Genome evolution in yeasts.</title>
        <authorList>
            <person name="Dujon B."/>
            <person name="Sherman D."/>
            <person name="Fischer G."/>
            <person name="Durrens P."/>
            <person name="Casaregola S."/>
            <person name="Lafontaine I."/>
            <person name="de Montigny J."/>
            <person name="Marck C."/>
            <person name="Neuveglise C."/>
            <person name="Talla E."/>
            <person name="Goffard N."/>
            <person name="Frangeul L."/>
            <person name="Aigle M."/>
            <person name="Anthouard V."/>
            <person name="Babour A."/>
            <person name="Barbe V."/>
            <person name="Barnay S."/>
            <person name="Blanchin S."/>
            <person name="Beckerich J.-M."/>
            <person name="Beyne E."/>
            <person name="Bleykasten C."/>
            <person name="Boisrame A."/>
            <person name="Boyer J."/>
            <person name="Cattolico L."/>
            <person name="Confanioleri F."/>
            <person name="de Daruvar A."/>
            <person name="Despons L."/>
            <person name="Fabre E."/>
            <person name="Fairhead C."/>
            <person name="Ferry-Dumazet H."/>
            <person name="Groppi A."/>
            <person name="Hantraye F."/>
            <person name="Hennequin C."/>
            <person name="Jauniaux N."/>
            <person name="Joyet P."/>
            <person name="Kachouri R."/>
            <person name="Kerrest A."/>
            <person name="Koszul R."/>
            <person name="Lemaire M."/>
            <person name="Lesur I."/>
            <person name="Ma L."/>
            <person name="Muller H."/>
            <person name="Nicaud J.-M."/>
            <person name="Nikolski M."/>
            <person name="Oztas S."/>
            <person name="Ozier-Kalogeropoulos O."/>
            <person name="Pellenz S."/>
            <person name="Potier S."/>
            <person name="Richard G.-F."/>
            <person name="Straub M.-L."/>
            <person name="Suleau A."/>
            <person name="Swennen D."/>
            <person name="Tekaia F."/>
            <person name="Wesolowski-Louvel M."/>
            <person name="Westhof E."/>
            <person name="Wirth B."/>
            <person name="Zeniou-Meyer M."/>
            <person name="Zivanovic Y."/>
            <person name="Bolotin-Fukuhara M."/>
            <person name="Thierry A."/>
            <person name="Bouchier C."/>
            <person name="Caudron B."/>
            <person name="Scarpelli C."/>
            <person name="Gaillardin C."/>
            <person name="Weissenbach J."/>
            <person name="Wincker P."/>
            <person name="Souciet J.-L."/>
        </authorList>
    </citation>
    <scope>NUCLEOTIDE SEQUENCE [LARGE SCALE GENOMIC DNA]</scope>
    <source>
        <strain>ATCC 36239 / CBS 767 / BCRC 21394 / JCM 1990 / NBRC 0083 / IGC 2968</strain>
    </source>
</reference>
<dbReference type="EC" id="3.4.-.-" evidence="6"/>
<dbReference type="EMBL" id="CR382138">
    <property type="protein sequence ID" value="CAG88967.2"/>
    <property type="molecule type" value="Genomic_DNA"/>
</dbReference>
<dbReference type="RefSeq" id="XP_460635.2">
    <property type="nucleotide sequence ID" value="XM_460635.1"/>
</dbReference>
<dbReference type="SMR" id="Q6BMD6"/>
<dbReference type="FunCoup" id="Q6BMD6">
    <property type="interactions" value="10"/>
</dbReference>
<dbReference type="STRING" id="284592.Q6BMD6"/>
<dbReference type="GeneID" id="2903146"/>
<dbReference type="KEGG" id="dha:DEHA2F06380g"/>
<dbReference type="VEuPathDB" id="FungiDB:DEHA2F06380g"/>
<dbReference type="eggNOG" id="KOG2194">
    <property type="taxonomic scope" value="Eukaryota"/>
</dbReference>
<dbReference type="HOGENOM" id="CLU_006412_1_0_1"/>
<dbReference type="InParanoid" id="Q6BMD6"/>
<dbReference type="OMA" id="TPWPVTI"/>
<dbReference type="OrthoDB" id="76293at2759"/>
<dbReference type="Proteomes" id="UP000000599">
    <property type="component" value="Chromosome F"/>
</dbReference>
<dbReference type="GO" id="GO:0005774">
    <property type="term" value="C:vacuolar membrane"/>
    <property type="evidence" value="ECO:0007669"/>
    <property type="project" value="UniProtKB-SubCell"/>
</dbReference>
<dbReference type="GO" id="GO:0046872">
    <property type="term" value="F:metal ion binding"/>
    <property type="evidence" value="ECO:0007669"/>
    <property type="project" value="UniProtKB-KW"/>
</dbReference>
<dbReference type="GO" id="GO:0008235">
    <property type="term" value="F:metalloexopeptidase activity"/>
    <property type="evidence" value="ECO:0007669"/>
    <property type="project" value="InterPro"/>
</dbReference>
<dbReference type="GO" id="GO:0006508">
    <property type="term" value="P:proteolysis"/>
    <property type="evidence" value="ECO:0007669"/>
    <property type="project" value="UniProtKB-KW"/>
</dbReference>
<dbReference type="CDD" id="cd03875">
    <property type="entry name" value="M28_Fxna_like"/>
    <property type="match status" value="1"/>
</dbReference>
<dbReference type="Gene3D" id="3.40.630.10">
    <property type="entry name" value="Zn peptidases"/>
    <property type="match status" value="1"/>
</dbReference>
<dbReference type="InterPro" id="IPR048024">
    <property type="entry name" value="Fxna-like_M28_dom"/>
</dbReference>
<dbReference type="InterPro" id="IPR045175">
    <property type="entry name" value="M28_fam"/>
</dbReference>
<dbReference type="InterPro" id="IPR007484">
    <property type="entry name" value="Peptidase_M28"/>
</dbReference>
<dbReference type="InterPro" id="IPR053975">
    <property type="entry name" value="PFF1_C"/>
</dbReference>
<dbReference type="InterPro" id="IPR053976">
    <property type="entry name" value="PFF1_TM"/>
</dbReference>
<dbReference type="PANTHER" id="PTHR12147">
    <property type="entry name" value="METALLOPEPTIDASE M28 FAMILY MEMBER"/>
    <property type="match status" value="1"/>
</dbReference>
<dbReference type="PANTHER" id="PTHR12147:SF58">
    <property type="entry name" value="VACUOLAR MEMBRANE PROTEASE"/>
    <property type="match status" value="1"/>
</dbReference>
<dbReference type="Pfam" id="PF04389">
    <property type="entry name" value="Peptidase_M28"/>
    <property type="match status" value="1"/>
</dbReference>
<dbReference type="Pfam" id="PF22250">
    <property type="entry name" value="PFF1_C"/>
    <property type="match status" value="1"/>
</dbReference>
<dbReference type="Pfam" id="PF22251">
    <property type="entry name" value="PFF1_TM"/>
    <property type="match status" value="2"/>
</dbReference>
<dbReference type="SUPFAM" id="SSF53187">
    <property type="entry name" value="Zn-dependent exopeptidases"/>
    <property type="match status" value="1"/>
</dbReference>